<reference key="1">
    <citation type="journal article" date="2008" name="ISME J.">
        <title>Comparative genomics of two ecotypes of the marine planktonic copiotroph Alteromonas macleodii suggests alternative lifestyles associated with different kinds of particulate organic matter.</title>
        <authorList>
            <person name="Ivars-Martinez E."/>
            <person name="Martin-Cuadrado A.-B."/>
            <person name="D'Auria G."/>
            <person name="Mira A."/>
            <person name="Ferriera S."/>
            <person name="Johnson J."/>
            <person name="Friedman R."/>
            <person name="Rodriguez-Valera F."/>
        </authorList>
    </citation>
    <scope>NUCLEOTIDE SEQUENCE [LARGE SCALE GENOMIC DNA]</scope>
    <source>
        <strain>DSM 17117 / CIP 110805 / LMG 28347 / Deep ecotype</strain>
    </source>
</reference>
<accession>B4RY55</accession>
<accession>F2G746</accession>
<comment type="function">
    <text evidence="1">Catalyzes the decarboxylation of 3-octaprenyl-4-hydroxy benzoate to 2-octaprenylphenol, an intermediate step in ubiquinone biosynthesis.</text>
</comment>
<comment type="catalytic activity">
    <reaction evidence="1">
        <text>a 4-hydroxy-3-(all-trans-polyprenyl)benzoate + H(+) = a 2-(all-trans-polyprenyl)phenol + CO2</text>
        <dbReference type="Rhea" id="RHEA:41680"/>
        <dbReference type="Rhea" id="RHEA-COMP:9514"/>
        <dbReference type="Rhea" id="RHEA-COMP:9516"/>
        <dbReference type="ChEBI" id="CHEBI:1269"/>
        <dbReference type="ChEBI" id="CHEBI:15378"/>
        <dbReference type="ChEBI" id="CHEBI:16526"/>
        <dbReference type="ChEBI" id="CHEBI:78396"/>
        <dbReference type="EC" id="4.1.1.98"/>
    </reaction>
</comment>
<comment type="cofactor">
    <cofactor evidence="1">
        <name>prenylated FMN</name>
        <dbReference type="ChEBI" id="CHEBI:87746"/>
    </cofactor>
    <text evidence="1">Binds 1 prenylated FMN per subunit.</text>
</comment>
<comment type="cofactor">
    <cofactor evidence="1">
        <name>Mn(2+)</name>
        <dbReference type="ChEBI" id="CHEBI:29035"/>
    </cofactor>
</comment>
<comment type="pathway">
    <text evidence="1">Cofactor biosynthesis; ubiquinone biosynthesis.</text>
</comment>
<comment type="subunit">
    <text evidence="1">Homohexamer.</text>
</comment>
<comment type="subcellular location">
    <subcellularLocation>
        <location evidence="1">Cell membrane</location>
        <topology evidence="1">Peripheral membrane protein</topology>
    </subcellularLocation>
</comment>
<comment type="similarity">
    <text evidence="1">Belongs to the UbiD family.</text>
</comment>
<proteinExistence type="inferred from homology"/>
<dbReference type="EC" id="4.1.1.98" evidence="1"/>
<dbReference type="EMBL" id="CP001103">
    <property type="protein sequence ID" value="AEA99696.1"/>
    <property type="molecule type" value="Genomic_DNA"/>
</dbReference>
<dbReference type="EMBL" id="CP001103">
    <property type="protein sequence ID" value="AEA99739.1"/>
    <property type="molecule type" value="Genomic_DNA"/>
</dbReference>
<dbReference type="SMR" id="B4RY55"/>
<dbReference type="KEGG" id="amc:MADE_1018075"/>
<dbReference type="HOGENOM" id="CLU_023348_4_1_6"/>
<dbReference type="UniPathway" id="UPA00232"/>
<dbReference type="Proteomes" id="UP000001870">
    <property type="component" value="Chromosome"/>
</dbReference>
<dbReference type="GO" id="GO:0005829">
    <property type="term" value="C:cytosol"/>
    <property type="evidence" value="ECO:0007669"/>
    <property type="project" value="TreeGrafter"/>
</dbReference>
<dbReference type="GO" id="GO:0005886">
    <property type="term" value="C:plasma membrane"/>
    <property type="evidence" value="ECO:0007669"/>
    <property type="project" value="UniProtKB-SubCell"/>
</dbReference>
<dbReference type="GO" id="GO:0008694">
    <property type="term" value="F:3-octaprenyl-4-hydroxybenzoate carboxy-lyase activity"/>
    <property type="evidence" value="ECO:0007669"/>
    <property type="project" value="UniProtKB-UniRule"/>
</dbReference>
<dbReference type="GO" id="GO:0046872">
    <property type="term" value="F:metal ion binding"/>
    <property type="evidence" value="ECO:0007669"/>
    <property type="project" value="UniProtKB-KW"/>
</dbReference>
<dbReference type="GO" id="GO:0006744">
    <property type="term" value="P:ubiquinone biosynthetic process"/>
    <property type="evidence" value="ECO:0007669"/>
    <property type="project" value="UniProtKB-UniRule"/>
</dbReference>
<dbReference type="FunFam" id="1.20.5.570:FF:000001">
    <property type="entry name" value="3-octaprenyl-4-hydroxybenzoate carboxy-lyase"/>
    <property type="match status" value="1"/>
</dbReference>
<dbReference type="FunFam" id="3.40.1670.10:FF:000001">
    <property type="entry name" value="3-octaprenyl-4-hydroxybenzoate carboxy-lyase"/>
    <property type="match status" value="1"/>
</dbReference>
<dbReference type="Gene3D" id="1.20.5.570">
    <property type="entry name" value="Single helix bin"/>
    <property type="match status" value="1"/>
</dbReference>
<dbReference type="Gene3D" id="3.40.1670.10">
    <property type="entry name" value="UbiD C-terminal domain-like"/>
    <property type="match status" value="1"/>
</dbReference>
<dbReference type="HAMAP" id="MF_01636">
    <property type="entry name" value="UbiD"/>
    <property type="match status" value="1"/>
</dbReference>
<dbReference type="InterPro" id="IPR002830">
    <property type="entry name" value="UbiD"/>
</dbReference>
<dbReference type="InterPro" id="IPR049381">
    <property type="entry name" value="UbiD-like_C"/>
</dbReference>
<dbReference type="InterPro" id="IPR049383">
    <property type="entry name" value="UbiD-like_N"/>
</dbReference>
<dbReference type="InterPro" id="IPR023677">
    <property type="entry name" value="UbiD_bacteria"/>
</dbReference>
<dbReference type="InterPro" id="IPR048304">
    <property type="entry name" value="UbiD_Rift_dom"/>
</dbReference>
<dbReference type="NCBIfam" id="NF008175">
    <property type="entry name" value="PRK10922.1"/>
    <property type="match status" value="1"/>
</dbReference>
<dbReference type="NCBIfam" id="TIGR00148">
    <property type="entry name" value="UbiD family decarboxylase"/>
    <property type="match status" value="1"/>
</dbReference>
<dbReference type="PANTHER" id="PTHR30108">
    <property type="entry name" value="3-OCTAPRENYL-4-HYDROXYBENZOATE CARBOXY-LYASE-RELATED"/>
    <property type="match status" value="1"/>
</dbReference>
<dbReference type="PANTHER" id="PTHR30108:SF17">
    <property type="entry name" value="FERULIC ACID DECARBOXYLASE 1"/>
    <property type="match status" value="1"/>
</dbReference>
<dbReference type="Pfam" id="PF01977">
    <property type="entry name" value="UbiD"/>
    <property type="match status" value="1"/>
</dbReference>
<dbReference type="Pfam" id="PF20696">
    <property type="entry name" value="UbiD_C"/>
    <property type="match status" value="1"/>
</dbReference>
<dbReference type="Pfam" id="PF20695">
    <property type="entry name" value="UbiD_N"/>
    <property type="match status" value="1"/>
</dbReference>
<dbReference type="SUPFAM" id="SSF50475">
    <property type="entry name" value="FMN-binding split barrel"/>
    <property type="match status" value="1"/>
</dbReference>
<dbReference type="SUPFAM" id="SSF143968">
    <property type="entry name" value="UbiD C-terminal domain-like"/>
    <property type="match status" value="1"/>
</dbReference>
<keyword id="KW-1003">Cell membrane</keyword>
<keyword id="KW-0210">Decarboxylase</keyword>
<keyword id="KW-0285">Flavoprotein</keyword>
<keyword id="KW-0288">FMN</keyword>
<keyword id="KW-0456">Lyase</keyword>
<keyword id="KW-0464">Manganese</keyword>
<keyword id="KW-0472">Membrane</keyword>
<keyword id="KW-0479">Metal-binding</keyword>
<keyword id="KW-0831">Ubiquinone biosynthesis</keyword>
<feature type="chain" id="PRO_1000186706" description="3-octaprenyl-4-hydroxybenzoate carboxy-lyase">
    <location>
        <begin position="1"/>
        <end position="488"/>
    </location>
</feature>
<feature type="active site" description="Proton donor" evidence="1">
    <location>
        <position position="287"/>
    </location>
</feature>
<feature type="binding site" evidence="1">
    <location>
        <position position="172"/>
    </location>
    <ligand>
        <name>Mn(2+)</name>
        <dbReference type="ChEBI" id="CHEBI:29035"/>
    </ligand>
</feature>
<feature type="binding site" evidence="1">
    <location>
        <begin position="175"/>
        <end position="177"/>
    </location>
    <ligand>
        <name>prenylated FMN</name>
        <dbReference type="ChEBI" id="CHEBI:87746"/>
    </ligand>
</feature>
<feature type="binding site" evidence="1">
    <location>
        <begin position="189"/>
        <end position="191"/>
    </location>
    <ligand>
        <name>prenylated FMN</name>
        <dbReference type="ChEBI" id="CHEBI:87746"/>
    </ligand>
</feature>
<feature type="binding site" evidence="1">
    <location>
        <begin position="194"/>
        <end position="195"/>
    </location>
    <ligand>
        <name>prenylated FMN</name>
        <dbReference type="ChEBI" id="CHEBI:87746"/>
    </ligand>
</feature>
<feature type="binding site" evidence="1">
    <location>
        <position position="238"/>
    </location>
    <ligand>
        <name>Mn(2+)</name>
        <dbReference type="ChEBI" id="CHEBI:29035"/>
    </ligand>
</feature>
<sequence>MKYKDLRDFIRQLEAKGELVRISQPIDTDLEMTEIADRTLRAGGPALLFENPKNHDMPVLANLFGTPERVAMGMGQESVEALREVGKLLAYLKEPEPPKGLKDLWEKLPVFKQVLNMPAKVLKKAPCQEVVLTGDDVDLSKIPVQRCWPGDAAPLVTWGLSVTKGPHKKRQNLGIYRQQVIGKNKLIMRWLSHRGGALDFREWCQTHPGEPYPVSVALGADPATILGAVTPVPDTLSEYAFAGLLRGDKTEVVKSISNDLQVPASAEIVLEGYIAQDETAPEGPYGDHTGYYNEVDDFPVFTVTHITHRKDPIYHSTYTGRPPDEPAILGVALNEVFVPILQKQFPEIVDFYLPPEGCSYRMAVVTMKKQYPGHAKRVMMGVWSFLRQFMYTKFVIVCDDDVNARDWNDVIWAITTRMDPARDTVMIENTPIDYLDFASPVSGLGSKMGMDATNKMPGETDREWGVPIVMDEGVKKRVDDIWDSLGIM</sequence>
<evidence type="ECO:0000255" key="1">
    <source>
        <dbReference type="HAMAP-Rule" id="MF_01636"/>
    </source>
</evidence>
<organism>
    <name type="scientific">Alteromonas mediterranea (strain DSM 17117 / CIP 110805 / LMG 28347 / Deep ecotype)</name>
    <dbReference type="NCBI Taxonomy" id="1774373"/>
    <lineage>
        <taxon>Bacteria</taxon>
        <taxon>Pseudomonadati</taxon>
        <taxon>Pseudomonadota</taxon>
        <taxon>Gammaproteobacteria</taxon>
        <taxon>Alteromonadales</taxon>
        <taxon>Alteromonadaceae</taxon>
        <taxon>Alteromonas/Salinimonas group</taxon>
        <taxon>Alteromonas</taxon>
    </lineage>
</organism>
<gene>
    <name evidence="1" type="primary">ubiD1</name>
    <name type="ordered locus">MADE_1017860</name>
</gene>
<gene>
    <name evidence="1" type="primary">ubiD2</name>
    <name type="ordered locus">MADE_1018075</name>
</gene>
<protein>
    <recommendedName>
        <fullName evidence="1">3-octaprenyl-4-hydroxybenzoate carboxy-lyase</fullName>
        <ecNumber evidence="1">4.1.1.98</ecNumber>
    </recommendedName>
    <alternativeName>
        <fullName evidence="1">Polyprenyl p-hydroxybenzoate decarboxylase</fullName>
    </alternativeName>
</protein>
<name>UBID_ALTMD</name>